<evidence type="ECO:0000269" key="1">
    <source>
    </source>
</evidence>
<evidence type="ECO:0000269" key="2">
    <source>
    </source>
</evidence>
<evidence type="ECO:0000269" key="3">
    <source>
    </source>
</evidence>
<evidence type="ECO:0000269" key="4">
    <source>
    </source>
</evidence>
<evidence type="ECO:0000303" key="5">
    <source>
    </source>
</evidence>
<evidence type="ECO:0000303" key="6">
    <source>
    </source>
</evidence>
<evidence type="ECO:0000305" key="7"/>
<evidence type="ECO:0000312" key="8">
    <source>
        <dbReference type="WormBase" id="F54E7.7"/>
    </source>
</evidence>
<sequence>MVADNSEKSTKSVANGSLISTVSSKDDLPNAIIVTQVPEDVFDNKQDKANFSSLFTQIEKDIHFDFLRSFRRVRVIFSSPENATAAKLIVQGFSFKGHELKAFFAQRIYMSANSQMLSPPPLEKQFLISPPCSPPVGWEQTKDMPPVVCNFDLMARLASFAIDEKYEVHNGDELTPAIIVHPCETPIDVPSAIEMPRTPRPSSPCEQ</sequence>
<organism>
    <name type="scientific">Caenorhabditis elegans</name>
    <dbReference type="NCBI Taxonomy" id="6239"/>
    <lineage>
        <taxon>Eukaryota</taxon>
        <taxon>Metazoa</taxon>
        <taxon>Ecdysozoa</taxon>
        <taxon>Nematoda</taxon>
        <taxon>Chromadorea</taxon>
        <taxon>Rhabditida</taxon>
        <taxon>Rhabditina</taxon>
        <taxon>Rhabditomorpha</taxon>
        <taxon>Rhabditoidea</taxon>
        <taxon>Rhabditidae</taxon>
        <taxon>Peloderinae</taxon>
        <taxon>Caenorhabditis</taxon>
    </lineage>
</organism>
<feature type="chain" id="PRO_0000211423" description="Calcipressin-like protein">
    <location>
        <begin position="1"/>
        <end position="207"/>
    </location>
</feature>
<feature type="region of interest" description="Required for tax-6 interaction" evidence="3">
    <location>
        <begin position="176"/>
        <end position="181"/>
    </location>
</feature>
<feature type="site" description="May be required for inhibiting calcineurin activity" evidence="3">
    <location>
        <position position="129"/>
    </location>
</feature>
<feature type="site" description="May be required for inhibiting calcineurin activity" evidence="3">
    <location>
        <position position="133"/>
    </location>
</feature>
<feature type="mutagenesis site" description="Resistant to serotonin-induced egg laying, a behavior positively regulated by calcineurin activity, resulting in a reduced number of eggs laid in a tax-6 (jh107) gain-of-function mutant background." evidence="3">
    <original>S</original>
    <variation>A</variation>
    <location>
        <position position="129"/>
    </location>
</feature>
<feature type="mutagenesis site" description="Resistant to serotonin-induced egg laying, a behavior positively regulated by calcineurin activity, resulting in a reduced number of eggs laid in a tax-6 (jh107) gain-of-function mutant background." evidence="3">
    <original>S</original>
    <variation>A</variation>
    <location>
        <position position="133"/>
    </location>
</feature>
<feature type="mutagenesis site" description="Abolished interaction with tax-6 in a yeast two-hybrid assay." evidence="3">
    <location>
        <begin position="176"/>
        <end position="181"/>
    </location>
</feature>
<feature type="mutagenesis site" description="Reduced body size as compared to wild-type." evidence="3">
    <location>
        <begin position="201"/>
        <end position="207"/>
    </location>
</feature>
<reference key="1">
    <citation type="journal article" date="2000" name="Genomics">
        <title>A new gene family including DSCR1 (Down syndrome candidate region 1) and ZAKI-4: characterization from yeast to human and identification of DSCR1-like 2, a novel human member (DSCR1L2).</title>
        <authorList>
            <person name="Strippoli P."/>
            <person name="Lenzi L."/>
            <person name="Petrini M."/>
            <person name="Carinci P."/>
            <person name="Zannotti M."/>
        </authorList>
    </citation>
    <scope>NUCLEOTIDE SEQUENCE [MRNA]</scope>
    <source>
        <strain>Bristol N2</strain>
    </source>
</reference>
<reference key="2">
    <citation type="journal article" date="1998" name="Science">
        <title>Genome sequence of the nematode C. elegans: a platform for investigating biology.</title>
        <authorList>
            <consortium name="The C. elegans sequencing consortium"/>
        </authorList>
    </citation>
    <scope>NUCLEOTIDE SEQUENCE [LARGE SCALE GENOMIC DNA]</scope>
    <source>
        <strain>Bristol N2</strain>
    </source>
</reference>
<reference key="3">
    <citation type="journal article" date="2003" name="J. Mol. Biol.">
        <title>The Caenorhabditis elegans homologue of Down syndrome critical region 1, RCN-1, inhibits multiple functions of the phosphatase calcineurin.</title>
        <authorList>
            <person name="Lee J.I."/>
            <person name="Dhakal B.K."/>
            <person name="Lee J."/>
            <person name="Bandyopadhyay J."/>
            <person name="Jeong S.Y."/>
            <person name="Eom S.H."/>
            <person name="Kim D.H."/>
            <person name="Ahnn J."/>
        </authorList>
    </citation>
    <scope>FUNCTION</scope>
    <scope>INTERACTION WITH TAX-6</scope>
    <scope>TISSUE SPECIFICITY</scope>
    <scope>DEVELOPMENTAL STAGE</scope>
</reference>
<reference key="4">
    <citation type="journal article" date="2011" name="PLoS Genet.">
        <title>A bow-tie genetic architecture for morphogenesis suggested by a genome-wide RNAi screen in Caenorhabditis elegans.</title>
        <authorList>
            <person name="Nelson M.D."/>
            <person name="Zhou E."/>
            <person name="Kiontke K."/>
            <person name="Fradin H."/>
            <person name="Maldonado G."/>
            <person name="Martin D."/>
            <person name="Shah K."/>
            <person name="Fitch D.H."/>
        </authorList>
    </citation>
    <scope>FUNCTION</scope>
    <scope>TISSUE SPECIFICITY</scope>
    <scope>DISRUPTION PHENOTYPE</scope>
</reference>
<reference key="5">
    <citation type="journal article" date="2015" name="J. Mol. Biol.">
        <title>Regulator of calcineurin (rcan-1) regulates thermotaxis behavior in Caenorhabditis elegans.</title>
        <authorList>
            <person name="Li W."/>
            <person name="Bell H.W."/>
            <person name="Ahnn J."/>
            <person name="Lee S.K."/>
        </authorList>
    </citation>
    <scope>FUNCTION</scope>
    <scope>INTERACTION WITH TAX-6</scope>
    <scope>DISRUPTION PHENOTYPE</scope>
    <scope>MUTAGENESIS OF SER-129; SER-133; 176-PRO--HIS-181 AND 201-PRO--GLN-207</scope>
</reference>
<reference key="6">
    <citation type="journal article" date="2016" name="Mol. Cells">
        <title>Allele-specific phenotype suggests a possible stimulatory activity of rcan-1 on calcineurin in Caenorhabditis elegans.</title>
        <authorList>
            <person name="Li W."/>
            <person name="Choi T.W."/>
            <person name="Ahnn J."/>
            <person name="Lee S.K."/>
        </authorList>
    </citation>
    <scope>FUNCTION</scope>
    <scope>TISSUE SPECIFICITY</scope>
    <scope>DISRUPTION PHENOTYPE</scope>
</reference>
<dbReference type="EMBL" id="AF176115">
    <property type="protein sequence ID" value="AAF01683.1"/>
    <property type="molecule type" value="mRNA"/>
</dbReference>
<dbReference type="EMBL" id="BX284603">
    <property type="protein sequence ID" value="CCD61769.1"/>
    <property type="molecule type" value="Genomic_DNA"/>
</dbReference>
<dbReference type="PIR" id="T34305">
    <property type="entry name" value="T34305"/>
</dbReference>
<dbReference type="RefSeq" id="NP_498223.2">
    <property type="nucleotide sequence ID" value="NM_065822.5"/>
</dbReference>
<dbReference type="SMR" id="P53806"/>
<dbReference type="BioGRID" id="41015">
    <property type="interactions" value="6"/>
</dbReference>
<dbReference type="FunCoup" id="P53806">
    <property type="interactions" value="1354"/>
</dbReference>
<dbReference type="IntAct" id="P53806">
    <property type="interactions" value="4"/>
</dbReference>
<dbReference type="STRING" id="6239.F54E7.7.1"/>
<dbReference type="iPTMnet" id="P53806"/>
<dbReference type="PaxDb" id="6239-F54E7.7"/>
<dbReference type="PeptideAtlas" id="P53806"/>
<dbReference type="EnsemblMetazoa" id="F54E7.7.1">
    <property type="protein sequence ID" value="F54E7.7.1"/>
    <property type="gene ID" value="WBGene00004321"/>
</dbReference>
<dbReference type="GeneID" id="175788"/>
<dbReference type="KEGG" id="cel:CELE_F54E7.7"/>
<dbReference type="UCSC" id="F54E7.7">
    <property type="organism name" value="c. elegans"/>
</dbReference>
<dbReference type="AGR" id="WB:WBGene00004321"/>
<dbReference type="CTD" id="175788"/>
<dbReference type="WormBase" id="F54E7.7">
    <property type="protein sequence ID" value="CE31002"/>
    <property type="gene ID" value="WBGene00004321"/>
    <property type="gene designation" value="rcan-1"/>
</dbReference>
<dbReference type="eggNOG" id="KOG4019">
    <property type="taxonomic scope" value="Eukaryota"/>
</dbReference>
<dbReference type="GeneTree" id="ENSGT00940000170734"/>
<dbReference type="HOGENOM" id="CLU_076190_0_0_1"/>
<dbReference type="InParanoid" id="P53806"/>
<dbReference type="OMA" id="RIMQTRC"/>
<dbReference type="OrthoDB" id="17212at2759"/>
<dbReference type="PhylomeDB" id="P53806"/>
<dbReference type="PRO" id="PR:P53806"/>
<dbReference type="Proteomes" id="UP000001940">
    <property type="component" value="Chromosome III"/>
</dbReference>
<dbReference type="Bgee" id="WBGene00004321">
    <property type="expression patterns" value="Expressed in pharyngeal muscle cell (C elegans) and 3 other cell types or tissues"/>
</dbReference>
<dbReference type="GO" id="GO:0005737">
    <property type="term" value="C:cytoplasm"/>
    <property type="evidence" value="ECO:0000250"/>
    <property type="project" value="WormBase"/>
</dbReference>
<dbReference type="GO" id="GO:0005634">
    <property type="term" value="C:nucleus"/>
    <property type="evidence" value="ECO:0000250"/>
    <property type="project" value="WormBase"/>
</dbReference>
<dbReference type="GO" id="GO:0008597">
    <property type="term" value="F:calcium-dependent protein serine/threonine phosphatase regulator activity"/>
    <property type="evidence" value="ECO:0000318"/>
    <property type="project" value="GO_Central"/>
</dbReference>
<dbReference type="GO" id="GO:0003676">
    <property type="term" value="F:nucleic acid binding"/>
    <property type="evidence" value="ECO:0007669"/>
    <property type="project" value="InterPro"/>
</dbReference>
<dbReference type="GO" id="GO:0030346">
    <property type="term" value="F:protein phosphatase 2B binding"/>
    <property type="evidence" value="ECO:0000353"/>
    <property type="project" value="WormBase"/>
</dbReference>
<dbReference type="GO" id="GO:0004865">
    <property type="term" value="F:protein serine/threonine phosphatase inhibitor activity"/>
    <property type="evidence" value="ECO:0000314"/>
    <property type="project" value="WormBase"/>
</dbReference>
<dbReference type="GO" id="GO:0019722">
    <property type="term" value="P:calcium-mediated signaling"/>
    <property type="evidence" value="ECO:0000315"/>
    <property type="project" value="WormBase"/>
</dbReference>
<dbReference type="GO" id="GO:0110039">
    <property type="term" value="P:positive regulation of nematode male tail tip morphogenesis"/>
    <property type="evidence" value="ECO:0000315"/>
    <property type="project" value="UniProtKB"/>
</dbReference>
<dbReference type="GO" id="GO:0034606">
    <property type="term" value="P:response to hermaphrodite contact"/>
    <property type="evidence" value="ECO:0000315"/>
    <property type="project" value="WormBase"/>
</dbReference>
<dbReference type="GO" id="GO:0040040">
    <property type="term" value="P:thermosensory behavior"/>
    <property type="evidence" value="ECO:0000315"/>
    <property type="project" value="WormBase"/>
</dbReference>
<dbReference type="GO" id="GO:0034608">
    <property type="term" value="P:vulval location"/>
    <property type="evidence" value="ECO:0000315"/>
    <property type="project" value="WormBase"/>
</dbReference>
<dbReference type="CDD" id="cd12434">
    <property type="entry name" value="RRM_RCAN_like"/>
    <property type="match status" value="1"/>
</dbReference>
<dbReference type="FunFam" id="3.30.70.330:FF:000092">
    <property type="entry name" value="Calcipressin-2 isoform 2"/>
    <property type="match status" value="1"/>
</dbReference>
<dbReference type="Gene3D" id="3.30.70.330">
    <property type="match status" value="1"/>
</dbReference>
<dbReference type="InterPro" id="IPR006931">
    <property type="entry name" value="Calcipressin"/>
</dbReference>
<dbReference type="InterPro" id="IPR012677">
    <property type="entry name" value="Nucleotide-bd_a/b_plait_sf"/>
</dbReference>
<dbReference type="InterPro" id="IPR035979">
    <property type="entry name" value="RBD_domain_sf"/>
</dbReference>
<dbReference type="PANTHER" id="PTHR10300">
    <property type="entry name" value="CALCIPRESSIN"/>
    <property type="match status" value="1"/>
</dbReference>
<dbReference type="PANTHER" id="PTHR10300:SF14">
    <property type="entry name" value="PROTEIN SARAH"/>
    <property type="match status" value="1"/>
</dbReference>
<dbReference type="Pfam" id="PF04847">
    <property type="entry name" value="Calcipressin"/>
    <property type="match status" value="1"/>
</dbReference>
<dbReference type="SUPFAM" id="SSF54928">
    <property type="entry name" value="RNA-binding domain, RBD"/>
    <property type="match status" value="1"/>
</dbReference>
<comment type="function">
    <text evidence="1 2 3 4">Inhibits tax-6/calcineurin A phosphatase activity and thereby negatively regulates calcineurin-mediated functions (PubMed:12684004, PubMed:26232604, PubMed:27871170). Plays a role in modulating temperature-dependent calcium responses in AFD neurons and in addition, also negatively regulates thermotaxis in a tax-6-dependent manner in AFD neurons (PubMed:26232604). In response to changes in intracellular calcium levels may also regulate nuclear translocation of transcriptional regulators such as crtc-1 (PubMed:26232604). May play a role in regulating body size (PubMed:27871170). Plays a role in male tail tip morphogenesis (PubMed:21408209).</text>
</comment>
<comment type="subunit">
    <text evidence="1 3">Interacts with tax-6 (via catalytic domain); the interaction is calcium-dependent.</text>
</comment>
<comment type="interaction">
    <interactant intactId="EBI-323055">
        <id>P53806</id>
    </interactant>
    <interactant intactId="EBI-323063">
        <id>Q0G819</id>
        <label>tax-6</label>
    </interactant>
    <organismsDiffer>false</organismsDiffer>
    <experiments>5</experiments>
</comment>
<comment type="tissue specificity">
    <text evidence="1 2 4">Expressed in lateral hypodermal cells, marginal cells of the pharynx, vulva epithelial cells, ventral and dorsal nerve cords and commissures and various neurons in the anterior and posterior regions (PubMed:12684004, PubMed:27871170). Expressed in male tail structures including the diagonal muscles, sensory rays and spicules (PubMed:12684004, PubMed:27871170). Expressed in PHC neurons and most tail neurons and support cells of the phasmid neurons (PubMed:21408209). Also expressed in pharyngeal muscle, head neurons, excretory canal cells and hypodermal seam cells (PubMed:27871170).</text>
</comment>
<comment type="developmental stage">
    <text evidence="1">Expressed from late embryogenesis to adulthood.</text>
</comment>
<comment type="disruption phenotype">
    <text evidence="2 3 4">Slightly shorter body length as compared to wild-type (PubMed:27871170). Reduced calcium responses in AFD neurons upon a temperature increase from 16 to 20 degrees Celsius as compared to wild-type (PubMed:26232604). At 17 and 20 degrees Celsius displays cryophilic behavior, preferentially migrating towards colder regions (PubMed:26232604). RNAi-mediated knockdown disrupts tail tip morphogenesis resulting in retention of the pointed larval tail tip in adult males (also known as the Lep phenotype) (PubMed:21408209).</text>
</comment>
<comment type="similarity">
    <text evidence="7">Belongs to the RCAN family.</text>
</comment>
<keyword id="KW-1185">Reference proteome</keyword>
<accession>P53806</accession>
<accession>Q9U6V5</accession>
<proteinExistence type="evidence at protein level"/>
<name>RCANL_CAEEL</name>
<protein>
    <recommendedName>
        <fullName>Calcipressin-like protein</fullName>
    </recommendedName>
    <alternativeName>
        <fullName evidence="5">Down syndrome candidate region 1-like protein</fullName>
    </alternativeName>
    <alternativeName>
        <fullName evidence="8">Regulator of calcineurin</fullName>
    </alternativeName>
</protein>
<gene>
    <name evidence="8" type="primary">rcan-1</name>
    <name evidence="5 8" type="synonym">dscr1l</name>
    <name evidence="6 8" type="synonym">rcn-1</name>
    <name evidence="8" type="ORF">F54E7.7</name>
</gene>